<comment type="subcellular location">
    <subcellularLocation>
        <location evidence="1">Cell inner membrane</location>
        <topology evidence="1">Multi-pass membrane protein</topology>
    </subcellularLocation>
</comment>
<comment type="similarity">
    <text evidence="1">Belongs to the UPF0761 family.</text>
</comment>
<keyword id="KW-0997">Cell inner membrane</keyword>
<keyword id="KW-1003">Cell membrane</keyword>
<keyword id="KW-0472">Membrane</keyword>
<keyword id="KW-0812">Transmembrane</keyword>
<keyword id="KW-1133">Transmembrane helix</keyword>
<accession>B5EZZ9</accession>
<protein>
    <recommendedName>
        <fullName evidence="1">UPF0761 membrane protein YihY</fullName>
    </recommendedName>
</protein>
<feature type="chain" id="PRO_1000131559" description="UPF0761 membrane protein YihY">
    <location>
        <begin position="1"/>
        <end position="290"/>
    </location>
</feature>
<feature type="transmembrane region" description="Helical" evidence="1">
    <location>
        <begin position="44"/>
        <end position="64"/>
    </location>
</feature>
<feature type="transmembrane region" description="Helical" evidence="1">
    <location>
        <begin position="104"/>
        <end position="124"/>
    </location>
</feature>
<feature type="transmembrane region" description="Helical" evidence="1">
    <location>
        <begin position="140"/>
        <end position="160"/>
    </location>
</feature>
<feature type="transmembrane region" description="Helical" evidence="1">
    <location>
        <begin position="183"/>
        <end position="203"/>
    </location>
</feature>
<feature type="transmembrane region" description="Helical" evidence="1">
    <location>
        <begin position="210"/>
        <end position="230"/>
    </location>
</feature>
<feature type="transmembrane region" description="Helical" evidence="1">
    <location>
        <begin position="244"/>
        <end position="264"/>
    </location>
</feature>
<reference key="1">
    <citation type="journal article" date="2011" name="J. Bacteriol.">
        <title>Comparative genomics of 28 Salmonella enterica isolates: evidence for CRISPR-mediated adaptive sublineage evolution.</title>
        <authorList>
            <person name="Fricke W.F."/>
            <person name="Mammel M.K."/>
            <person name="McDermott P.F."/>
            <person name="Tartera C."/>
            <person name="White D.G."/>
            <person name="Leclerc J.E."/>
            <person name="Ravel J."/>
            <person name="Cebula T.A."/>
        </authorList>
    </citation>
    <scope>NUCLEOTIDE SEQUENCE [LARGE SCALE GENOMIC DNA]</scope>
    <source>
        <strain>SL483</strain>
    </source>
</reference>
<evidence type="ECO:0000255" key="1">
    <source>
        <dbReference type="HAMAP-Rule" id="MF_00672"/>
    </source>
</evidence>
<dbReference type="EMBL" id="CP001138">
    <property type="protein sequence ID" value="ACH51049.1"/>
    <property type="molecule type" value="Genomic_DNA"/>
</dbReference>
<dbReference type="RefSeq" id="WP_000921423.1">
    <property type="nucleotide sequence ID" value="NC_011149.1"/>
</dbReference>
<dbReference type="KEGG" id="sea:SeAg_B4260"/>
<dbReference type="HOGENOM" id="CLU_032288_0_0_6"/>
<dbReference type="Proteomes" id="UP000008819">
    <property type="component" value="Chromosome"/>
</dbReference>
<dbReference type="GO" id="GO:0005886">
    <property type="term" value="C:plasma membrane"/>
    <property type="evidence" value="ECO:0007669"/>
    <property type="project" value="UniProtKB-SubCell"/>
</dbReference>
<dbReference type="HAMAP" id="MF_00672">
    <property type="entry name" value="UPF0761"/>
    <property type="match status" value="1"/>
</dbReference>
<dbReference type="InterPro" id="IPR023679">
    <property type="entry name" value="UPF0761_bac"/>
</dbReference>
<dbReference type="InterPro" id="IPR017039">
    <property type="entry name" value="Virul_fac_BrkB"/>
</dbReference>
<dbReference type="NCBIfam" id="NF002457">
    <property type="entry name" value="PRK01637.1"/>
    <property type="match status" value="1"/>
</dbReference>
<dbReference type="NCBIfam" id="TIGR00765">
    <property type="entry name" value="yihY_not_rbn"/>
    <property type="match status" value="1"/>
</dbReference>
<dbReference type="PANTHER" id="PTHR30213">
    <property type="entry name" value="INNER MEMBRANE PROTEIN YHJD"/>
    <property type="match status" value="1"/>
</dbReference>
<dbReference type="PANTHER" id="PTHR30213:SF0">
    <property type="entry name" value="UPF0761 MEMBRANE PROTEIN YIHY"/>
    <property type="match status" value="1"/>
</dbReference>
<dbReference type="Pfam" id="PF03631">
    <property type="entry name" value="Virul_fac_BrkB"/>
    <property type="match status" value="1"/>
</dbReference>
<dbReference type="PIRSF" id="PIRSF035875">
    <property type="entry name" value="RNase_BN"/>
    <property type="match status" value="1"/>
</dbReference>
<organism>
    <name type="scientific">Salmonella agona (strain SL483)</name>
    <dbReference type="NCBI Taxonomy" id="454166"/>
    <lineage>
        <taxon>Bacteria</taxon>
        <taxon>Pseudomonadati</taxon>
        <taxon>Pseudomonadota</taxon>
        <taxon>Gammaproteobacteria</taxon>
        <taxon>Enterobacterales</taxon>
        <taxon>Enterobacteriaceae</taxon>
        <taxon>Salmonella</taxon>
    </lineage>
</organism>
<gene>
    <name evidence="1" type="primary">yihY</name>
    <name type="ordered locus">SeAg_B4260</name>
</gene>
<sequence>MLKTVHQKAGRHTRPVRAWLKLLWQRIDEDNMTTLAGNLAYVSLLSLVPLIAVVFALFAAFPMFSDVSIQLRHFIFANFMPATGDVIQRYIEQFVANSNKMTAVGACGLIVTALLLMYAIDSALNTIWRSKRTRPKVYSFAVYWMILTLGPLLAGASLAISSYLLSLRWASDLNTVIDNVLRILPLLLSWISFWLLYSIVPTTRVPNRDALVGAFVAALLFEAGKKGFALYITMFPSYQLIYGVLAVIPILFVWVYWTWCIVLLGAEITVTLGEYRKLKQAAEQEEADQP</sequence>
<proteinExistence type="inferred from homology"/>
<name>YIHY_SALA4</name>